<name>RHMA_ECOK1</name>
<accession>A1AD97</accession>
<sequence>MNALLTNPFKERLRKGEVQIGLWLSSTTAYMAEIAATSGYDWLLIDGEHAPNTIQDLYHQLQAVAPYASHPVIRPVEGSKPLIKQVLDIGAQTLLIPMVDTADQARQVVSATRYPPYGERGVGASVARAARWGRIENYMAQVNDSLCLLVQVESKTALDNLDEILDVEGIDGVFIGPADLSASLGYPDNAGHPEVQRIIETSIRRIRAAGKAAGFLAVAPDMAQQCLAWGANFVAVGVDTMLYSDALDQRLAMFKSGKNGPRVKGSY</sequence>
<organism>
    <name type="scientific">Escherichia coli O1:K1 / APEC</name>
    <dbReference type="NCBI Taxonomy" id="405955"/>
    <lineage>
        <taxon>Bacteria</taxon>
        <taxon>Pseudomonadati</taxon>
        <taxon>Pseudomonadota</taxon>
        <taxon>Gammaproteobacteria</taxon>
        <taxon>Enterobacterales</taxon>
        <taxon>Enterobacteriaceae</taxon>
        <taxon>Escherichia</taxon>
    </lineage>
</organism>
<comment type="function">
    <text evidence="1">Catalyzes the reversible retro-aldol cleavage of 2-keto-3-deoxy-L-rhamnonate (KDR) to pyruvate and lactaldehyde.</text>
</comment>
<comment type="catalytic activity">
    <reaction evidence="1">
        <text>2-dehydro-3-deoxy-L-rhamnonate = (S)-lactaldehyde + pyruvate</text>
        <dbReference type="Rhea" id="RHEA:25784"/>
        <dbReference type="ChEBI" id="CHEBI:15361"/>
        <dbReference type="ChEBI" id="CHEBI:18041"/>
        <dbReference type="ChEBI" id="CHEBI:58371"/>
        <dbReference type="EC" id="4.1.2.53"/>
    </reaction>
</comment>
<comment type="cofactor">
    <cofactor evidence="1">
        <name>Mg(2+)</name>
        <dbReference type="ChEBI" id="CHEBI:18420"/>
    </cofactor>
    <text evidence="1">Binds 1 Mg(2+) ion per subunit.</text>
</comment>
<comment type="subunit">
    <text evidence="1">Homohexamer.</text>
</comment>
<comment type="similarity">
    <text evidence="1">Belongs to the HpcH/HpaI aldolase family. KDR aldolase subfamily.</text>
</comment>
<feature type="chain" id="PRO_0000353166" description="2-keto-3-deoxy-L-rhamnonate aldolase">
    <location>
        <begin position="1"/>
        <end position="267"/>
    </location>
</feature>
<feature type="active site" description="Proton acceptor" evidence="1">
    <location>
        <position position="49"/>
    </location>
</feature>
<feature type="binding site" evidence="1">
    <location>
        <position position="151"/>
    </location>
    <ligand>
        <name>substrate</name>
    </ligand>
</feature>
<feature type="binding site" evidence="1">
    <location>
        <position position="153"/>
    </location>
    <ligand>
        <name>Mg(2+)</name>
        <dbReference type="ChEBI" id="CHEBI:18420"/>
    </ligand>
</feature>
<feature type="binding site" evidence="1">
    <location>
        <position position="178"/>
    </location>
    <ligand>
        <name>substrate</name>
    </ligand>
</feature>
<feature type="binding site" evidence="1">
    <location>
        <position position="179"/>
    </location>
    <ligand>
        <name>Mg(2+)</name>
        <dbReference type="ChEBI" id="CHEBI:18420"/>
    </ligand>
</feature>
<feature type="binding site" evidence="1">
    <location>
        <position position="179"/>
    </location>
    <ligand>
        <name>substrate</name>
    </ligand>
</feature>
<feature type="site" description="Transition state stabilizer" evidence="1">
    <location>
        <position position="74"/>
    </location>
</feature>
<feature type="site" description="Increases basicity of active site His" evidence="1">
    <location>
        <position position="88"/>
    </location>
</feature>
<reference key="1">
    <citation type="journal article" date="2007" name="J. Bacteriol.">
        <title>The genome sequence of avian pathogenic Escherichia coli strain O1:K1:H7 shares strong similarities with human extraintestinal pathogenic E. coli genomes.</title>
        <authorList>
            <person name="Johnson T.J."/>
            <person name="Kariyawasam S."/>
            <person name="Wannemuehler Y."/>
            <person name="Mangiamele P."/>
            <person name="Johnson S.J."/>
            <person name="Doetkott C."/>
            <person name="Skyberg J.A."/>
            <person name="Lynne A.M."/>
            <person name="Johnson J.R."/>
            <person name="Nolan L.K."/>
        </authorList>
    </citation>
    <scope>NUCLEOTIDE SEQUENCE [LARGE SCALE GENOMIC DNA]</scope>
</reference>
<keyword id="KW-0456">Lyase</keyword>
<keyword id="KW-0460">Magnesium</keyword>
<keyword id="KW-0479">Metal-binding</keyword>
<keyword id="KW-1185">Reference proteome</keyword>
<protein>
    <recommendedName>
        <fullName evidence="1">2-keto-3-deoxy-L-rhamnonate aldolase</fullName>
        <shortName evidence="1">KDR aldolase</shortName>
        <ecNumber evidence="1">4.1.2.53</ecNumber>
    </recommendedName>
    <alternativeName>
        <fullName evidence="1">2-dehydro-3-deoxyrhamnonate aldolase</fullName>
    </alternativeName>
</protein>
<proteinExistence type="inferred from homology"/>
<evidence type="ECO:0000255" key="1">
    <source>
        <dbReference type="HAMAP-Rule" id="MF_01290"/>
    </source>
</evidence>
<dbReference type="EC" id="4.1.2.53" evidence="1"/>
<dbReference type="EMBL" id="CP000468">
    <property type="protein sequence ID" value="ABJ01637.1"/>
    <property type="molecule type" value="Genomic_DNA"/>
</dbReference>
<dbReference type="SMR" id="A1AD97"/>
<dbReference type="KEGG" id="ecv:APECO1_4316"/>
<dbReference type="HOGENOM" id="CLU_059964_1_0_6"/>
<dbReference type="Proteomes" id="UP000008216">
    <property type="component" value="Chromosome"/>
</dbReference>
<dbReference type="GO" id="GO:0005737">
    <property type="term" value="C:cytoplasm"/>
    <property type="evidence" value="ECO:0007669"/>
    <property type="project" value="TreeGrafter"/>
</dbReference>
<dbReference type="GO" id="GO:0106099">
    <property type="term" value="F:2-keto-3-deoxy-L-rhamnonate aldolase activity"/>
    <property type="evidence" value="ECO:0007669"/>
    <property type="project" value="UniProtKB-EC"/>
</dbReference>
<dbReference type="GO" id="GO:0000287">
    <property type="term" value="F:magnesium ion binding"/>
    <property type="evidence" value="ECO:0007669"/>
    <property type="project" value="UniProtKB-UniRule"/>
</dbReference>
<dbReference type="FunFam" id="3.20.20.60:FF:000004">
    <property type="entry name" value="5-keto-4-deoxy-D-glucarate aldolase"/>
    <property type="match status" value="1"/>
</dbReference>
<dbReference type="Gene3D" id="3.20.20.60">
    <property type="entry name" value="Phosphoenolpyruvate-binding domains"/>
    <property type="match status" value="1"/>
</dbReference>
<dbReference type="HAMAP" id="MF_01290">
    <property type="entry name" value="KDR_aldolase"/>
    <property type="match status" value="1"/>
</dbReference>
<dbReference type="InterPro" id="IPR005000">
    <property type="entry name" value="Aldolase/citrate-lyase_domain"/>
</dbReference>
<dbReference type="InterPro" id="IPR050251">
    <property type="entry name" value="HpcH-HpaI_aldolase"/>
</dbReference>
<dbReference type="InterPro" id="IPR023593">
    <property type="entry name" value="KDR_aldolase"/>
</dbReference>
<dbReference type="InterPro" id="IPR015813">
    <property type="entry name" value="Pyrv/PenolPyrv_kinase-like_dom"/>
</dbReference>
<dbReference type="InterPro" id="IPR040442">
    <property type="entry name" value="Pyrv_kinase-like_dom_sf"/>
</dbReference>
<dbReference type="NCBIfam" id="NF007521">
    <property type="entry name" value="PRK10128.1"/>
    <property type="match status" value="1"/>
</dbReference>
<dbReference type="PANTHER" id="PTHR30502">
    <property type="entry name" value="2-KETO-3-DEOXY-L-RHAMNONATE ALDOLASE"/>
    <property type="match status" value="1"/>
</dbReference>
<dbReference type="PANTHER" id="PTHR30502:SF5">
    <property type="entry name" value="2-KETO-3-DEOXY-L-RHAMNONATE ALDOLASE"/>
    <property type="match status" value="1"/>
</dbReference>
<dbReference type="Pfam" id="PF03328">
    <property type="entry name" value="HpcH_HpaI"/>
    <property type="match status" value="1"/>
</dbReference>
<dbReference type="SUPFAM" id="SSF51621">
    <property type="entry name" value="Phosphoenolpyruvate/pyruvate domain"/>
    <property type="match status" value="1"/>
</dbReference>
<gene>
    <name evidence="1" type="primary">rhmA</name>
    <name type="ordered locus">Ecok1_21430</name>
    <name type="ORF">APECO1_4316</name>
</gene>